<accession>P17639</accession>
<accession>Q5KTS6</accession>
<evidence type="ECO:0000256" key="1">
    <source>
        <dbReference type="SAM" id="MobiDB-lite"/>
    </source>
</evidence>
<evidence type="ECO:0000269" key="2">
    <source>
    </source>
</evidence>
<evidence type="ECO:0000269" key="3">
    <source ref="3"/>
</evidence>
<evidence type="ECO:0000269" key="4">
    <source ref="4"/>
</evidence>
<evidence type="ECO:0000303" key="5">
    <source>
    </source>
</evidence>
<evidence type="ECO:0000303" key="6">
    <source ref="3"/>
</evidence>
<evidence type="ECO:0000305" key="7"/>
<evidence type="ECO:0000305" key="8">
    <source ref="4"/>
</evidence>
<evidence type="ECO:0000312" key="9">
    <source>
        <dbReference type="EMBL" id="BAD86647.1"/>
    </source>
</evidence>
<organism>
    <name type="scientific">Daucus carota</name>
    <name type="common">Wild carrot</name>
    <dbReference type="NCBI Taxonomy" id="4039"/>
    <lineage>
        <taxon>Eukaryota</taxon>
        <taxon>Viridiplantae</taxon>
        <taxon>Streptophyta</taxon>
        <taxon>Embryophyta</taxon>
        <taxon>Tracheophyta</taxon>
        <taxon>Spermatophyta</taxon>
        <taxon>Magnoliopsida</taxon>
        <taxon>eudicotyledons</taxon>
        <taxon>Gunneridae</taxon>
        <taxon>Pentapetalae</taxon>
        <taxon>asterids</taxon>
        <taxon>campanulids</taxon>
        <taxon>Apiales</taxon>
        <taxon>Apiaceae</taxon>
        <taxon>Apioideae</taxon>
        <taxon>Scandiceae</taxon>
        <taxon>Daucinae</taxon>
        <taxon>Daucus</taxon>
        <taxon>Daucus sect. Daucus</taxon>
    </lineage>
</organism>
<sequence length="92" mass="9917">MASQQEKKELDARARQGETVVPGGTGGKSLEAQQHLAEGRSKGGQTRKEQLGGEGYHEMGRKGGLSNNDMSGGERAEQEGIDIDESKFRTKK</sequence>
<reference key="1">
    <citation type="journal article" date="1990" name="Nucleic Acids Res.">
        <title>Sequence of EMB-1, an mRNA accumulating specifically in embryos of carrot.</title>
        <authorList>
            <person name="Ulrich T.H."/>
            <person name="Wurtele E.S."/>
            <person name="Nikolau B.J."/>
        </authorList>
    </citation>
    <scope>NUCLEOTIDE SEQUENCE [MRNA]</scope>
    <scope>DEVELOPMENTAL STAGE</scope>
    <source>
        <strain>cv. Danvers Half-long</strain>
        <tissue>Embryo</tissue>
    </source>
</reference>
<reference key="2">
    <citation type="journal article" date="1993" name="Plant Physiol.">
        <title>Characterization of a gene that is expressed early in somatic embryogenesis of Daucus carota.</title>
        <authorList>
            <person name="Wurtele E.S."/>
            <person name="Wang H."/>
            <person name="Durgerian S."/>
            <person name="Nikolau B.J."/>
            <person name="Ulrich T.H."/>
        </authorList>
    </citation>
    <scope>NUCLEOTIDE SEQUENCE [GENOMIC DNA]</scope>
    <scope>DEVELOPMENTAL STAGE</scope>
    <scope>TISSUE SPECIFICITY</scope>
    <source>
        <strain>cv. Danvers Half-long</strain>
        <tissue>Embryo</tissue>
    </source>
</reference>
<reference key="3">
    <citation type="journal article" date="2004" name="Plant Biotechnol. (Sheffield)">
        <title>Isolation and characterization of six abscisic acid-inducible genes from carrot somatic embryos.</title>
        <authorList>
            <person name="Shiota H."/>
            <person name="Yang G."/>
            <person name="Shen S."/>
            <person name="Eun C.H."/>
            <person name="Watabe K."/>
            <person name="Tanaka I."/>
            <person name="Kamada H."/>
        </authorList>
    </citation>
    <scope>NUCLEOTIDE SEQUENCE [MRNA]</scope>
    <scope>INDUCTION BY ABSCISIC ACID</scope>
    <source>
        <strain>cv. US-Harumakigosun</strain>
        <tissue>Somatic embryo</tissue>
    </source>
</reference>
<reference key="4">
    <citation type="journal article" date="1996" name="Plant Sci.">
        <title>The embryo-specific EMB-1 protein of Daucus carota is flexible and unstructured in solution.</title>
        <authorList>
            <person name="Eom J."/>
            <person name="Baker W.R."/>
            <person name="Kintanar A."/>
            <person name="Wurtele E.S."/>
        </authorList>
    </citation>
    <scope>STRUCTURE BY NMR</scope>
    <scope>SUBCELLULAR LOCATION</scope>
</reference>
<gene>
    <name evidence="5" type="primary">EMB-1</name>
    <name evidence="6" type="synonym">CAISE4</name>
    <name evidence="9" type="synonym">EMB1</name>
</gene>
<proteinExistence type="evidence at protein level"/>
<feature type="chain" id="PRO_0000185678" description="Protein EMB-1">
    <location>
        <begin position="1"/>
        <end position="92"/>
    </location>
</feature>
<feature type="region of interest" description="Disordered" evidence="1">
    <location>
        <begin position="1"/>
        <end position="92"/>
    </location>
</feature>
<feature type="compositionally biased region" description="Basic and acidic residues" evidence="1">
    <location>
        <begin position="1"/>
        <end position="16"/>
    </location>
</feature>
<feature type="compositionally biased region" description="Basic and acidic residues" evidence="1">
    <location>
        <begin position="37"/>
        <end position="61"/>
    </location>
</feature>
<feature type="compositionally biased region" description="Basic and acidic residues" evidence="1">
    <location>
        <begin position="72"/>
        <end position="92"/>
    </location>
</feature>
<dbReference type="EMBL" id="X17608">
    <property type="protein sequence ID" value="CAA35610.1"/>
    <property type="molecule type" value="mRNA"/>
</dbReference>
<dbReference type="EMBL" id="X60131">
    <property type="protein sequence ID" value="CAA42717.1"/>
    <property type="molecule type" value="Genomic_DNA"/>
</dbReference>
<dbReference type="EMBL" id="AB105042">
    <property type="protein sequence ID" value="BAD86647.1"/>
    <property type="molecule type" value="mRNA"/>
</dbReference>
<dbReference type="PIR" id="JQ2273">
    <property type="entry name" value="JQ2273"/>
</dbReference>
<dbReference type="SMR" id="P17639"/>
<dbReference type="OMA" id="INRRTSW"/>
<dbReference type="GO" id="GO:0005829">
    <property type="term" value="C:cytosol"/>
    <property type="evidence" value="ECO:0007669"/>
    <property type="project" value="TreeGrafter"/>
</dbReference>
<dbReference type="GO" id="GO:0005634">
    <property type="term" value="C:nucleus"/>
    <property type="evidence" value="ECO:0007669"/>
    <property type="project" value="UniProtKB-SubCell"/>
</dbReference>
<dbReference type="GO" id="GO:0009737">
    <property type="term" value="P:response to abscisic acid"/>
    <property type="evidence" value="ECO:0007669"/>
    <property type="project" value="TreeGrafter"/>
</dbReference>
<dbReference type="DisProt" id="DP01860"/>
<dbReference type="InterPro" id="IPR038956">
    <property type="entry name" value="LEA_5"/>
</dbReference>
<dbReference type="InterPro" id="IPR022377">
    <property type="entry name" value="Sm_Hydphi_plant_seed_CS"/>
</dbReference>
<dbReference type="InterPro" id="IPR000389">
    <property type="entry name" value="Small_hydrophilic_seed_prot"/>
</dbReference>
<dbReference type="PANTHER" id="PTHR34671">
    <property type="entry name" value="EM-LIKE PROTEIN GEA1"/>
    <property type="match status" value="1"/>
</dbReference>
<dbReference type="PANTHER" id="PTHR34671:SF19">
    <property type="entry name" value="EMBRYONIC ABUNDANT PROTEIN 1"/>
    <property type="match status" value="1"/>
</dbReference>
<dbReference type="Pfam" id="PF00477">
    <property type="entry name" value="LEA_5"/>
    <property type="match status" value="1"/>
</dbReference>
<dbReference type="PROSITE" id="PS00431">
    <property type="entry name" value="SMALL_HYDR_PLANT_SEED"/>
    <property type="match status" value="1"/>
</dbReference>
<protein>
    <recommendedName>
        <fullName evidence="5">Protein EMB-1</fullName>
    </recommendedName>
    <alternativeName>
        <fullName evidence="6">Carrot ABA-induced in somatic embryos 4</fullName>
    </alternativeName>
</protein>
<name>EMB1_DAUCA</name>
<comment type="subcellular location">
    <subcellularLocation>
        <location evidence="8">Nucleus</location>
    </subcellularLocation>
</comment>
<comment type="tissue specificity">
    <text evidence="2 3">Expressed in embryogenic cells, somatic embryos and seeds at the later stages of development. In the embryos, expressed in the procambium, the root and shoot meristem and the protoderm of the cotyledons. Not detected in the endosperm or the aleurone layer, in young leaves or roots.</text>
</comment>
<comment type="developmental stage">
    <text evidence="2 5">Expressed specifically in embryos, both zygotic and somatic. Present at low levels in globular embryos. At the heart-stage, accumulates throughout the peripheral regions of the embryo and in the mature torpedo embryo expressed in the meristematic regions.</text>
</comment>
<comment type="induction">
    <text evidence="3">Up-regulated by abscisic acid.</text>
</comment>
<comment type="miscellaneous">
    <text evidence="4">Completely disordered protein. Flexible and unstructured in solution.</text>
</comment>
<comment type="similarity">
    <text evidence="7">Belongs to the small hydrophilic plant seed protein family.</text>
</comment>
<keyword id="KW-0539">Nucleus</keyword>